<proteinExistence type="evidence at protein level"/>
<evidence type="ECO:0000255" key="1">
    <source>
        <dbReference type="HAMAP-Rule" id="MF_01560"/>
    </source>
</evidence>
<evidence type="ECO:0000269" key="2">
    <source>
    </source>
</evidence>
<evidence type="ECO:0007829" key="3">
    <source>
        <dbReference type="PDB" id="2ODM"/>
    </source>
</evidence>
<protein>
    <recommendedName>
        <fullName evidence="1">UPF0358 protein MW0995</fullName>
    </recommendedName>
</protein>
<gene>
    <name type="ordered locus">MW0995</name>
</gene>
<reference key="1">
    <citation type="journal article" date="2002" name="Lancet">
        <title>Genome and virulence determinants of high virulence community-acquired MRSA.</title>
        <authorList>
            <person name="Baba T."/>
            <person name="Takeuchi F."/>
            <person name="Kuroda M."/>
            <person name="Yuzawa H."/>
            <person name="Aoki K."/>
            <person name="Oguchi A."/>
            <person name="Nagai Y."/>
            <person name="Iwama N."/>
            <person name="Asano K."/>
            <person name="Naimi T."/>
            <person name="Kuroda H."/>
            <person name="Cui L."/>
            <person name="Yamamoto K."/>
            <person name="Hiramatsu K."/>
        </authorList>
    </citation>
    <scope>NUCLEOTIDE SEQUENCE [LARGE SCALE GENOMIC DNA]</scope>
    <source>
        <strain>MW2</strain>
    </source>
</reference>
<reference key="2">
    <citation type="journal article" date="2007" name="Proteins">
        <title>Crystal structure of S. aureus YlaN, an essential leucine rich protein involved in the control of cell shape.</title>
        <authorList>
            <person name="Xu L."/>
            <person name="Sedelnikova S.E."/>
            <person name="Baker P.J."/>
            <person name="Hunt A."/>
            <person name="Errington J."/>
            <person name="Rice D.W."/>
        </authorList>
    </citation>
    <scope>X-RAY CRYSTALLOGRAPHY (2.24 ANGSTROMS)</scope>
    <scope>SUBUNIT</scope>
</reference>
<organism>
    <name type="scientific">Staphylococcus aureus (strain MW2)</name>
    <dbReference type="NCBI Taxonomy" id="196620"/>
    <lineage>
        <taxon>Bacteria</taxon>
        <taxon>Bacillati</taxon>
        <taxon>Bacillota</taxon>
        <taxon>Bacilli</taxon>
        <taxon>Bacillales</taxon>
        <taxon>Staphylococcaceae</taxon>
        <taxon>Staphylococcus</taxon>
    </lineage>
</organism>
<accession>Q7A161</accession>
<name>Y995_STAAW</name>
<keyword id="KW-0002">3D-structure</keyword>
<feature type="chain" id="PRO_0000110655" description="UPF0358 protein MW0995">
    <location>
        <begin position="1"/>
        <end position="91"/>
    </location>
</feature>
<feature type="helix" evidence="3">
    <location>
        <begin position="6"/>
        <end position="30"/>
    </location>
</feature>
<feature type="helix" evidence="3">
    <location>
        <begin position="41"/>
        <end position="61"/>
    </location>
</feature>
<feature type="helix" evidence="3">
    <location>
        <begin position="67"/>
        <end position="82"/>
    </location>
</feature>
<dbReference type="EMBL" id="BA000033">
    <property type="protein sequence ID" value="BAB94860.1"/>
    <property type="molecule type" value="Genomic_DNA"/>
</dbReference>
<dbReference type="RefSeq" id="WP_001118417.1">
    <property type="nucleotide sequence ID" value="NC_003923.1"/>
</dbReference>
<dbReference type="PDB" id="2ODM">
    <property type="method" value="X-ray"/>
    <property type="resolution" value="2.24 A"/>
    <property type="chains" value="A/B=1-91"/>
</dbReference>
<dbReference type="PDBsum" id="2ODM"/>
<dbReference type="SMR" id="Q7A161"/>
<dbReference type="KEGG" id="sam:MW0995"/>
<dbReference type="HOGENOM" id="CLU_160493_1_0_9"/>
<dbReference type="EvolutionaryTrace" id="Q7A161"/>
<dbReference type="Gene3D" id="1.10.287.750">
    <property type="entry name" value="SO2669-like"/>
    <property type="match status" value="1"/>
</dbReference>
<dbReference type="HAMAP" id="MF_01560">
    <property type="entry name" value="UPF0358"/>
    <property type="match status" value="1"/>
</dbReference>
<dbReference type="InterPro" id="IPR009983">
    <property type="entry name" value="UPF0358"/>
</dbReference>
<dbReference type="InterPro" id="IPR036270">
    <property type="entry name" value="UPF0358_sf"/>
</dbReference>
<dbReference type="NCBIfam" id="NF010187">
    <property type="entry name" value="PRK13666.1"/>
    <property type="match status" value="1"/>
</dbReference>
<dbReference type="Pfam" id="PF07408">
    <property type="entry name" value="DUF1507"/>
    <property type="match status" value="1"/>
</dbReference>
<dbReference type="SUPFAM" id="SSF140404">
    <property type="entry name" value="EF2458-like"/>
    <property type="match status" value="1"/>
</dbReference>
<comment type="subunit">
    <text evidence="2">Homodimer.</text>
</comment>
<comment type="similarity">
    <text evidence="1">Belongs to the UPF0358 family.</text>
</comment>
<sequence length="91" mass="10355">MAKQATMKNAALKQLTKDADEILHLIKVQLDNLTLPSCPLYEEVLDTQMFGLQKEVDFAVKLGLVDREDGKQIMLRLEKELSKLHEAFTLV</sequence>